<gene>
    <name type="primary">cheW</name>
    <name type="ordered locus">TP_0439</name>
</gene>
<accession>O83453</accession>
<proteinExistence type="inferred from homology"/>
<comment type="function">
    <text evidence="1">Involved in the transmission of sensory signals from the chemoreceptors to the flagellar motors.</text>
</comment>
<comment type="subcellular location">
    <subcellularLocation>
        <location evidence="1">Cytoplasm</location>
    </subcellularLocation>
</comment>
<reference key="1">
    <citation type="journal article" date="1998" name="Science">
        <title>Complete genome sequence of Treponema pallidum, the syphilis spirochete.</title>
        <authorList>
            <person name="Fraser C.M."/>
            <person name="Norris S.J."/>
            <person name="Weinstock G.M."/>
            <person name="White O."/>
            <person name="Sutton G.G."/>
            <person name="Dodson R.J."/>
            <person name="Gwinn M.L."/>
            <person name="Hickey E.K."/>
            <person name="Clayton R.A."/>
            <person name="Ketchum K.A."/>
            <person name="Sodergren E."/>
            <person name="Hardham J.M."/>
            <person name="McLeod M.P."/>
            <person name="Salzberg S.L."/>
            <person name="Peterson J.D."/>
            <person name="Khalak H.G."/>
            <person name="Richardson D.L."/>
            <person name="Howell J.K."/>
            <person name="Chidambaram M."/>
            <person name="Utterback T.R."/>
            <person name="McDonald L.A."/>
            <person name="Artiach P."/>
            <person name="Bowman C."/>
            <person name="Cotton M.D."/>
            <person name="Fujii C."/>
            <person name="Garland S.A."/>
            <person name="Hatch B."/>
            <person name="Horst K."/>
            <person name="Roberts K.M."/>
            <person name="Sandusky M."/>
            <person name="Weidman J.F."/>
            <person name="Smith H.O."/>
            <person name="Venter J.C."/>
        </authorList>
    </citation>
    <scope>NUCLEOTIDE SEQUENCE [LARGE SCALE GENOMIC DNA]</scope>
    <source>
        <strain>Nichols</strain>
    </source>
</reference>
<dbReference type="EMBL" id="AE000520">
    <property type="protein sequence ID" value="AAC65426.1"/>
    <property type="molecule type" value="Genomic_DNA"/>
</dbReference>
<dbReference type="PIR" id="G71323">
    <property type="entry name" value="G71323"/>
</dbReference>
<dbReference type="SMR" id="O83453"/>
<dbReference type="IntAct" id="O83453">
    <property type="interactions" value="3"/>
</dbReference>
<dbReference type="STRING" id="243276.TP_0439"/>
<dbReference type="EnsemblBacteria" id="AAC65426">
    <property type="protein sequence ID" value="AAC65426"/>
    <property type="gene ID" value="TP_0439"/>
</dbReference>
<dbReference type="KEGG" id="tpa:TP_0439"/>
<dbReference type="KEGG" id="tpw:TPANIC_0439"/>
<dbReference type="eggNOG" id="COG0835">
    <property type="taxonomic scope" value="Bacteria"/>
</dbReference>
<dbReference type="HOGENOM" id="CLU_048995_3_1_12"/>
<dbReference type="OrthoDB" id="9794382at2"/>
<dbReference type="Proteomes" id="UP000000811">
    <property type="component" value="Chromosome"/>
</dbReference>
<dbReference type="GO" id="GO:0005829">
    <property type="term" value="C:cytosol"/>
    <property type="evidence" value="ECO:0007669"/>
    <property type="project" value="TreeGrafter"/>
</dbReference>
<dbReference type="GO" id="GO:0006935">
    <property type="term" value="P:chemotaxis"/>
    <property type="evidence" value="ECO:0007669"/>
    <property type="project" value="UniProtKB-KW"/>
</dbReference>
<dbReference type="GO" id="GO:0007165">
    <property type="term" value="P:signal transduction"/>
    <property type="evidence" value="ECO:0007669"/>
    <property type="project" value="InterPro"/>
</dbReference>
<dbReference type="CDD" id="cd00732">
    <property type="entry name" value="CheW"/>
    <property type="match status" value="1"/>
</dbReference>
<dbReference type="Gene3D" id="2.40.50.180">
    <property type="entry name" value="CheA-289, Domain 4"/>
    <property type="match status" value="1"/>
</dbReference>
<dbReference type="Gene3D" id="2.30.30.40">
    <property type="entry name" value="SH3 Domains"/>
    <property type="match status" value="1"/>
</dbReference>
<dbReference type="InterPro" id="IPR039315">
    <property type="entry name" value="CheW"/>
</dbReference>
<dbReference type="InterPro" id="IPR036061">
    <property type="entry name" value="CheW-like_dom_sf"/>
</dbReference>
<dbReference type="InterPro" id="IPR002545">
    <property type="entry name" value="CheW-lke_dom"/>
</dbReference>
<dbReference type="PANTHER" id="PTHR22617:SF23">
    <property type="entry name" value="CHEMOTAXIS PROTEIN CHEW"/>
    <property type="match status" value="1"/>
</dbReference>
<dbReference type="PANTHER" id="PTHR22617">
    <property type="entry name" value="CHEMOTAXIS SENSOR HISTIDINE KINASE-RELATED"/>
    <property type="match status" value="1"/>
</dbReference>
<dbReference type="Pfam" id="PF01584">
    <property type="entry name" value="CheW"/>
    <property type="match status" value="1"/>
</dbReference>
<dbReference type="SMART" id="SM00260">
    <property type="entry name" value="CheW"/>
    <property type="match status" value="1"/>
</dbReference>
<dbReference type="SUPFAM" id="SSF50341">
    <property type="entry name" value="CheW-like"/>
    <property type="match status" value="1"/>
</dbReference>
<dbReference type="PROSITE" id="PS50851">
    <property type="entry name" value="CHEW"/>
    <property type="match status" value="1"/>
</dbReference>
<sequence>MYHGPTLHHRRVPMAVNDEQFQLVTFQLGEELYGIDIMGVKEIVKVQDVRPIPCAPAYVEGIFNLRSEIIPIINLHKRFHLREATLESGDEYLGGFVILNVEDSKLGIIIDRIARVIAVSQEDVQSPPQVITGIGAEYIHGVVRQGTSYLIVLDIHKLFSSKELQKLANL</sequence>
<name>CHEW_TREPA</name>
<keyword id="KW-0145">Chemotaxis</keyword>
<keyword id="KW-0963">Cytoplasm</keyword>
<keyword id="KW-1185">Reference proteome</keyword>
<evidence type="ECO:0000250" key="1"/>
<evidence type="ECO:0000255" key="2">
    <source>
        <dbReference type="PROSITE-ProRule" id="PRU00052"/>
    </source>
</evidence>
<organism>
    <name type="scientific">Treponema pallidum (strain Nichols)</name>
    <dbReference type="NCBI Taxonomy" id="243276"/>
    <lineage>
        <taxon>Bacteria</taxon>
        <taxon>Pseudomonadati</taxon>
        <taxon>Spirochaetota</taxon>
        <taxon>Spirochaetia</taxon>
        <taxon>Spirochaetales</taxon>
        <taxon>Treponemataceae</taxon>
        <taxon>Treponema</taxon>
    </lineage>
</organism>
<feature type="chain" id="PRO_0000198350" description="Chemotaxis protein CheW">
    <location>
        <begin position="1"/>
        <end position="170"/>
    </location>
</feature>
<feature type="domain" description="CheW-like" evidence="2">
    <location>
        <begin position="20"/>
        <end position="164"/>
    </location>
</feature>
<protein>
    <recommendedName>
        <fullName>Chemotaxis protein CheW</fullName>
    </recommendedName>
</protein>